<feature type="chain" id="PRO_1000026228" description="Nucleoside diphosphate kinase">
    <location>
        <begin position="1"/>
        <end position="136"/>
    </location>
</feature>
<feature type="active site" description="Pros-phosphohistidine intermediate" evidence="1">
    <location>
        <position position="115"/>
    </location>
</feature>
<feature type="binding site" evidence="1">
    <location>
        <position position="9"/>
    </location>
    <ligand>
        <name>ATP</name>
        <dbReference type="ChEBI" id="CHEBI:30616"/>
    </ligand>
</feature>
<feature type="binding site" evidence="1">
    <location>
        <position position="57"/>
    </location>
    <ligand>
        <name>ATP</name>
        <dbReference type="ChEBI" id="CHEBI:30616"/>
    </ligand>
</feature>
<feature type="binding site" evidence="1">
    <location>
        <position position="85"/>
    </location>
    <ligand>
        <name>ATP</name>
        <dbReference type="ChEBI" id="CHEBI:30616"/>
    </ligand>
</feature>
<feature type="binding site" evidence="1">
    <location>
        <position position="91"/>
    </location>
    <ligand>
        <name>ATP</name>
        <dbReference type="ChEBI" id="CHEBI:30616"/>
    </ligand>
</feature>
<feature type="binding site" evidence="1">
    <location>
        <position position="102"/>
    </location>
    <ligand>
        <name>ATP</name>
        <dbReference type="ChEBI" id="CHEBI:30616"/>
    </ligand>
</feature>
<feature type="binding site" evidence="1">
    <location>
        <position position="112"/>
    </location>
    <ligand>
        <name>ATP</name>
        <dbReference type="ChEBI" id="CHEBI:30616"/>
    </ligand>
</feature>
<organism>
    <name type="scientific">Acetivibrio thermocellus (strain ATCC 27405 / DSM 1237 / JCM 9322 / NBRC 103400 / NCIMB 10682 / NRRL B-4536 / VPI 7372)</name>
    <name type="common">Clostridium thermocellum</name>
    <dbReference type="NCBI Taxonomy" id="203119"/>
    <lineage>
        <taxon>Bacteria</taxon>
        <taxon>Bacillati</taxon>
        <taxon>Bacillota</taxon>
        <taxon>Clostridia</taxon>
        <taxon>Eubacteriales</taxon>
        <taxon>Oscillospiraceae</taxon>
        <taxon>Acetivibrio</taxon>
    </lineage>
</organism>
<reference key="1">
    <citation type="submission" date="2007-02" db="EMBL/GenBank/DDBJ databases">
        <title>Complete sequence of Clostridium thermocellum ATCC 27405.</title>
        <authorList>
            <consortium name="US DOE Joint Genome Institute"/>
            <person name="Copeland A."/>
            <person name="Lucas S."/>
            <person name="Lapidus A."/>
            <person name="Barry K."/>
            <person name="Detter J.C."/>
            <person name="Glavina del Rio T."/>
            <person name="Hammon N."/>
            <person name="Israni S."/>
            <person name="Dalin E."/>
            <person name="Tice H."/>
            <person name="Pitluck S."/>
            <person name="Chertkov O."/>
            <person name="Brettin T."/>
            <person name="Bruce D."/>
            <person name="Han C."/>
            <person name="Tapia R."/>
            <person name="Gilna P."/>
            <person name="Schmutz J."/>
            <person name="Larimer F."/>
            <person name="Land M."/>
            <person name="Hauser L."/>
            <person name="Kyrpides N."/>
            <person name="Mikhailova N."/>
            <person name="Wu J.H.D."/>
            <person name="Newcomb M."/>
            <person name="Richardson P."/>
        </authorList>
    </citation>
    <scope>NUCLEOTIDE SEQUENCE [LARGE SCALE GENOMIC DNA]</scope>
    <source>
        <strain>ATCC 27405 / DSM 1237 / JCM 9322 / NBRC 103400 / NCIMB 10682 / NRRL B-4536 / VPI 7372</strain>
    </source>
</reference>
<evidence type="ECO:0000255" key="1">
    <source>
        <dbReference type="HAMAP-Rule" id="MF_00451"/>
    </source>
</evidence>
<accession>A3DDC2</accession>
<dbReference type="EC" id="2.7.4.6" evidence="1"/>
<dbReference type="EMBL" id="CP000568">
    <property type="protein sequence ID" value="ABN51951.1"/>
    <property type="molecule type" value="Genomic_DNA"/>
</dbReference>
<dbReference type="RefSeq" id="WP_003516225.1">
    <property type="nucleotide sequence ID" value="NC_009012.1"/>
</dbReference>
<dbReference type="SMR" id="A3DDC2"/>
<dbReference type="STRING" id="203119.Cthe_0716"/>
<dbReference type="GeneID" id="35803807"/>
<dbReference type="KEGG" id="cth:Cthe_0716"/>
<dbReference type="eggNOG" id="COG0105">
    <property type="taxonomic scope" value="Bacteria"/>
</dbReference>
<dbReference type="HOGENOM" id="CLU_060216_6_3_9"/>
<dbReference type="OrthoDB" id="9801161at2"/>
<dbReference type="Proteomes" id="UP000002145">
    <property type="component" value="Chromosome"/>
</dbReference>
<dbReference type="GO" id="GO:0005737">
    <property type="term" value="C:cytoplasm"/>
    <property type="evidence" value="ECO:0007669"/>
    <property type="project" value="UniProtKB-SubCell"/>
</dbReference>
<dbReference type="GO" id="GO:0005524">
    <property type="term" value="F:ATP binding"/>
    <property type="evidence" value="ECO:0007669"/>
    <property type="project" value="UniProtKB-UniRule"/>
</dbReference>
<dbReference type="GO" id="GO:0046872">
    <property type="term" value="F:metal ion binding"/>
    <property type="evidence" value="ECO:0007669"/>
    <property type="project" value="UniProtKB-KW"/>
</dbReference>
<dbReference type="GO" id="GO:0004550">
    <property type="term" value="F:nucleoside diphosphate kinase activity"/>
    <property type="evidence" value="ECO:0007669"/>
    <property type="project" value="UniProtKB-UniRule"/>
</dbReference>
<dbReference type="GO" id="GO:0006241">
    <property type="term" value="P:CTP biosynthetic process"/>
    <property type="evidence" value="ECO:0007669"/>
    <property type="project" value="UniProtKB-UniRule"/>
</dbReference>
<dbReference type="GO" id="GO:0006183">
    <property type="term" value="P:GTP biosynthetic process"/>
    <property type="evidence" value="ECO:0007669"/>
    <property type="project" value="UniProtKB-UniRule"/>
</dbReference>
<dbReference type="GO" id="GO:0006228">
    <property type="term" value="P:UTP biosynthetic process"/>
    <property type="evidence" value="ECO:0007669"/>
    <property type="project" value="UniProtKB-UniRule"/>
</dbReference>
<dbReference type="CDD" id="cd04413">
    <property type="entry name" value="NDPk_I"/>
    <property type="match status" value="1"/>
</dbReference>
<dbReference type="FunFam" id="3.30.70.141:FF:000003">
    <property type="entry name" value="Nucleoside diphosphate kinase"/>
    <property type="match status" value="1"/>
</dbReference>
<dbReference type="Gene3D" id="3.30.70.141">
    <property type="entry name" value="Nucleoside diphosphate kinase-like domain"/>
    <property type="match status" value="1"/>
</dbReference>
<dbReference type="HAMAP" id="MF_00451">
    <property type="entry name" value="NDP_kinase"/>
    <property type="match status" value="1"/>
</dbReference>
<dbReference type="InterPro" id="IPR034907">
    <property type="entry name" value="NDK-like_dom"/>
</dbReference>
<dbReference type="InterPro" id="IPR036850">
    <property type="entry name" value="NDK-like_dom_sf"/>
</dbReference>
<dbReference type="InterPro" id="IPR001564">
    <property type="entry name" value="Nucleoside_diP_kinase"/>
</dbReference>
<dbReference type="NCBIfam" id="NF001908">
    <property type="entry name" value="PRK00668.1"/>
    <property type="match status" value="1"/>
</dbReference>
<dbReference type="PANTHER" id="PTHR11349">
    <property type="entry name" value="NUCLEOSIDE DIPHOSPHATE KINASE"/>
    <property type="match status" value="1"/>
</dbReference>
<dbReference type="Pfam" id="PF00334">
    <property type="entry name" value="NDK"/>
    <property type="match status" value="1"/>
</dbReference>
<dbReference type="PRINTS" id="PR01243">
    <property type="entry name" value="NUCDPKINASE"/>
</dbReference>
<dbReference type="SMART" id="SM00562">
    <property type="entry name" value="NDK"/>
    <property type="match status" value="1"/>
</dbReference>
<dbReference type="SUPFAM" id="SSF54919">
    <property type="entry name" value="Nucleoside diphosphate kinase, NDK"/>
    <property type="match status" value="1"/>
</dbReference>
<dbReference type="PROSITE" id="PS51374">
    <property type="entry name" value="NDPK_LIKE"/>
    <property type="match status" value="1"/>
</dbReference>
<sequence length="136" mass="15690">MERTLVILKPDSVKRKLVGEIISRFEKRNFTILHLKMMNIDRELACEHYSHVKDKPFFNDMIDYITSGPVVVMVLSGYRVIEAVRSMVGATSNFDSKPGTIRGDYGYHRFENLIHASDSCESAEIEIKRFFPELDS</sequence>
<proteinExistence type="inferred from homology"/>
<keyword id="KW-0067">ATP-binding</keyword>
<keyword id="KW-0963">Cytoplasm</keyword>
<keyword id="KW-0418">Kinase</keyword>
<keyword id="KW-0460">Magnesium</keyword>
<keyword id="KW-0479">Metal-binding</keyword>
<keyword id="KW-0546">Nucleotide metabolism</keyword>
<keyword id="KW-0547">Nucleotide-binding</keyword>
<keyword id="KW-0597">Phosphoprotein</keyword>
<keyword id="KW-1185">Reference proteome</keyword>
<keyword id="KW-0808">Transferase</keyword>
<comment type="function">
    <text evidence="1">Major role in the synthesis of nucleoside triphosphates other than ATP. The ATP gamma phosphate is transferred to the NDP beta phosphate via a ping-pong mechanism, using a phosphorylated active-site intermediate.</text>
</comment>
<comment type="catalytic activity">
    <reaction evidence="1">
        <text>a 2'-deoxyribonucleoside 5'-diphosphate + ATP = a 2'-deoxyribonucleoside 5'-triphosphate + ADP</text>
        <dbReference type="Rhea" id="RHEA:44640"/>
        <dbReference type="ChEBI" id="CHEBI:30616"/>
        <dbReference type="ChEBI" id="CHEBI:61560"/>
        <dbReference type="ChEBI" id="CHEBI:73316"/>
        <dbReference type="ChEBI" id="CHEBI:456216"/>
        <dbReference type="EC" id="2.7.4.6"/>
    </reaction>
</comment>
<comment type="catalytic activity">
    <reaction evidence="1">
        <text>a ribonucleoside 5'-diphosphate + ATP = a ribonucleoside 5'-triphosphate + ADP</text>
        <dbReference type="Rhea" id="RHEA:18113"/>
        <dbReference type="ChEBI" id="CHEBI:30616"/>
        <dbReference type="ChEBI" id="CHEBI:57930"/>
        <dbReference type="ChEBI" id="CHEBI:61557"/>
        <dbReference type="ChEBI" id="CHEBI:456216"/>
        <dbReference type="EC" id="2.7.4.6"/>
    </reaction>
</comment>
<comment type="cofactor">
    <cofactor evidence="1">
        <name>Mg(2+)</name>
        <dbReference type="ChEBI" id="CHEBI:18420"/>
    </cofactor>
</comment>
<comment type="subunit">
    <text evidence="1">Homotetramer.</text>
</comment>
<comment type="subcellular location">
    <subcellularLocation>
        <location evidence="1">Cytoplasm</location>
    </subcellularLocation>
</comment>
<comment type="similarity">
    <text evidence="1">Belongs to the NDK family.</text>
</comment>
<protein>
    <recommendedName>
        <fullName evidence="1">Nucleoside diphosphate kinase</fullName>
        <shortName evidence="1">NDK</shortName>
        <shortName evidence="1">NDP kinase</shortName>
        <ecNumber evidence="1">2.7.4.6</ecNumber>
    </recommendedName>
    <alternativeName>
        <fullName evidence="1">Nucleoside-2-P kinase</fullName>
    </alternativeName>
</protein>
<gene>
    <name evidence="1" type="primary">ndk</name>
    <name type="ordered locus">Cthe_0716</name>
</gene>
<name>NDK_ACET2</name>